<comment type="function">
    <text evidence="1">Formation of pseudouridine at positions 38, 39 and 40 in the anticodon stem and loop of transfer RNAs.</text>
</comment>
<comment type="catalytic activity">
    <reaction evidence="1">
        <text>uridine(38/39/40) in tRNA = pseudouridine(38/39/40) in tRNA</text>
        <dbReference type="Rhea" id="RHEA:22376"/>
        <dbReference type="Rhea" id="RHEA-COMP:10085"/>
        <dbReference type="Rhea" id="RHEA-COMP:10087"/>
        <dbReference type="ChEBI" id="CHEBI:65314"/>
        <dbReference type="ChEBI" id="CHEBI:65315"/>
        <dbReference type="EC" id="5.4.99.12"/>
    </reaction>
</comment>
<comment type="subunit">
    <text evidence="1">Homodimer.</text>
</comment>
<comment type="similarity">
    <text evidence="1">Belongs to the tRNA pseudouridine synthase TruA family.</text>
</comment>
<organism>
    <name type="scientific">Dechloromonas aromatica (strain RCB)</name>
    <dbReference type="NCBI Taxonomy" id="159087"/>
    <lineage>
        <taxon>Bacteria</taxon>
        <taxon>Pseudomonadati</taxon>
        <taxon>Pseudomonadota</taxon>
        <taxon>Betaproteobacteria</taxon>
        <taxon>Rhodocyclales</taxon>
        <taxon>Azonexaceae</taxon>
        <taxon>Dechloromonas</taxon>
    </lineage>
</organism>
<dbReference type="EC" id="5.4.99.12" evidence="1"/>
<dbReference type="EMBL" id="CP000089">
    <property type="protein sequence ID" value="AAZ45624.1"/>
    <property type="molecule type" value="Genomic_DNA"/>
</dbReference>
<dbReference type="SMR" id="Q47HQ7"/>
<dbReference type="STRING" id="159087.Daro_0868"/>
<dbReference type="KEGG" id="dar:Daro_0868"/>
<dbReference type="eggNOG" id="COG0101">
    <property type="taxonomic scope" value="Bacteria"/>
</dbReference>
<dbReference type="HOGENOM" id="CLU_014673_0_2_4"/>
<dbReference type="OrthoDB" id="9811823at2"/>
<dbReference type="GO" id="GO:0003723">
    <property type="term" value="F:RNA binding"/>
    <property type="evidence" value="ECO:0007669"/>
    <property type="project" value="InterPro"/>
</dbReference>
<dbReference type="GO" id="GO:0160147">
    <property type="term" value="F:tRNA pseudouridine(38-40) synthase activity"/>
    <property type="evidence" value="ECO:0007669"/>
    <property type="project" value="UniProtKB-EC"/>
</dbReference>
<dbReference type="GO" id="GO:0031119">
    <property type="term" value="P:tRNA pseudouridine synthesis"/>
    <property type="evidence" value="ECO:0007669"/>
    <property type="project" value="UniProtKB-UniRule"/>
</dbReference>
<dbReference type="CDD" id="cd02570">
    <property type="entry name" value="PseudoU_synth_EcTruA"/>
    <property type="match status" value="1"/>
</dbReference>
<dbReference type="FunFam" id="3.30.70.580:FF:000001">
    <property type="entry name" value="tRNA pseudouridine synthase A"/>
    <property type="match status" value="1"/>
</dbReference>
<dbReference type="Gene3D" id="3.30.70.660">
    <property type="entry name" value="Pseudouridine synthase I, catalytic domain, C-terminal subdomain"/>
    <property type="match status" value="1"/>
</dbReference>
<dbReference type="Gene3D" id="3.30.70.580">
    <property type="entry name" value="Pseudouridine synthase I, catalytic domain, N-terminal subdomain"/>
    <property type="match status" value="1"/>
</dbReference>
<dbReference type="HAMAP" id="MF_00171">
    <property type="entry name" value="TruA"/>
    <property type="match status" value="1"/>
</dbReference>
<dbReference type="InterPro" id="IPR020103">
    <property type="entry name" value="PsdUridine_synth_cat_dom_sf"/>
</dbReference>
<dbReference type="InterPro" id="IPR001406">
    <property type="entry name" value="PsdUridine_synth_TruA"/>
</dbReference>
<dbReference type="InterPro" id="IPR020097">
    <property type="entry name" value="PsdUridine_synth_TruA_a/b_dom"/>
</dbReference>
<dbReference type="InterPro" id="IPR020095">
    <property type="entry name" value="PsdUridine_synth_TruA_C"/>
</dbReference>
<dbReference type="InterPro" id="IPR020094">
    <property type="entry name" value="TruA/RsuA/RluB/E/F_N"/>
</dbReference>
<dbReference type="NCBIfam" id="TIGR00071">
    <property type="entry name" value="hisT_truA"/>
    <property type="match status" value="1"/>
</dbReference>
<dbReference type="PANTHER" id="PTHR11142">
    <property type="entry name" value="PSEUDOURIDYLATE SYNTHASE"/>
    <property type="match status" value="1"/>
</dbReference>
<dbReference type="PANTHER" id="PTHR11142:SF0">
    <property type="entry name" value="TRNA PSEUDOURIDINE SYNTHASE-LIKE 1"/>
    <property type="match status" value="1"/>
</dbReference>
<dbReference type="Pfam" id="PF01416">
    <property type="entry name" value="PseudoU_synth_1"/>
    <property type="match status" value="2"/>
</dbReference>
<dbReference type="PIRSF" id="PIRSF001430">
    <property type="entry name" value="tRNA_psdUrid_synth"/>
    <property type="match status" value="1"/>
</dbReference>
<dbReference type="SUPFAM" id="SSF55120">
    <property type="entry name" value="Pseudouridine synthase"/>
    <property type="match status" value="1"/>
</dbReference>
<sequence length="262" mass="29140">MRVALGIEYCGTGFHGWQSQAGGGTVQDALEAALGEVAGVPVGVLCAGRTDAGVHATHQVAHFDAPVDRPLTAWVRGVNSHLPEGVAVRWAQPVAEDFHARFSARGRRYRYLLLNRPQRPGLWQGRVGWFHWPLELEAMQEACLRLLGEHDFSAFRAANCQAKSPVKHMSRAEVRQCGNMFVFDFEASAFLHHMVRNLVGTLVYIGKGTQQPDWIEALLQTKDRKLAAPTFSPDGLYFRGPVYEPHWGLPDPNDDFLDGMLK</sequence>
<accession>Q47HQ7</accession>
<protein>
    <recommendedName>
        <fullName evidence="1">tRNA pseudouridine synthase A</fullName>
        <ecNumber evidence="1">5.4.99.12</ecNumber>
    </recommendedName>
    <alternativeName>
        <fullName evidence="1">tRNA pseudouridine(38-40) synthase</fullName>
    </alternativeName>
    <alternativeName>
        <fullName evidence="1">tRNA pseudouridylate synthase I</fullName>
    </alternativeName>
    <alternativeName>
        <fullName evidence="1">tRNA-uridine isomerase I</fullName>
    </alternativeName>
</protein>
<name>TRUA_DECAR</name>
<keyword id="KW-0413">Isomerase</keyword>
<keyword id="KW-0819">tRNA processing</keyword>
<reference key="1">
    <citation type="journal article" date="2009" name="BMC Genomics">
        <title>Metabolic analysis of the soil microbe Dechloromonas aromatica str. RCB: indications of a surprisingly complex life-style and cryptic anaerobic pathways for aromatic degradation.</title>
        <authorList>
            <person name="Salinero K.K."/>
            <person name="Keller K."/>
            <person name="Feil W.S."/>
            <person name="Feil H."/>
            <person name="Trong S."/>
            <person name="Di Bartolo G."/>
            <person name="Lapidus A."/>
        </authorList>
    </citation>
    <scope>NUCLEOTIDE SEQUENCE [LARGE SCALE GENOMIC DNA]</scope>
    <source>
        <strain>RCB</strain>
    </source>
</reference>
<feature type="chain" id="PRO_1000017072" description="tRNA pseudouridine synthase A">
    <location>
        <begin position="1"/>
        <end position="262"/>
    </location>
</feature>
<feature type="active site" description="Nucleophile" evidence="1">
    <location>
        <position position="51"/>
    </location>
</feature>
<feature type="binding site" evidence="1">
    <location>
        <position position="109"/>
    </location>
    <ligand>
        <name>substrate</name>
    </ligand>
</feature>
<proteinExistence type="inferred from homology"/>
<evidence type="ECO:0000255" key="1">
    <source>
        <dbReference type="HAMAP-Rule" id="MF_00171"/>
    </source>
</evidence>
<gene>
    <name evidence="1" type="primary">truA</name>
    <name type="ordered locus">Daro_0868</name>
</gene>